<feature type="chain" id="PRO_1000013091" description="Putative membrane protein insertion efficiency factor">
    <location>
        <begin position="1"/>
        <end position="86"/>
    </location>
</feature>
<comment type="function">
    <text evidence="1">Could be involved in insertion of integral membrane proteins into the membrane.</text>
</comment>
<comment type="subcellular location">
    <subcellularLocation>
        <location evidence="1">Cell inner membrane</location>
        <topology evidence="1">Peripheral membrane protein</topology>
        <orientation evidence="1">Cytoplasmic side</orientation>
    </subcellularLocation>
</comment>
<comment type="similarity">
    <text evidence="1">Belongs to the UPF0161 family.</text>
</comment>
<keyword id="KW-0997">Cell inner membrane</keyword>
<keyword id="KW-1003">Cell membrane</keyword>
<keyword id="KW-0472">Membrane</keyword>
<reference key="1">
    <citation type="journal article" date="2007" name="Genome Biol.">
        <title>Characterization and modeling of the Haemophilus influenzae core and supragenomes based on the complete genomic sequences of Rd and 12 clinical nontypeable strains.</title>
        <authorList>
            <person name="Hogg J.S."/>
            <person name="Hu F.Z."/>
            <person name="Janto B."/>
            <person name="Boissy R."/>
            <person name="Hayes J."/>
            <person name="Keefe R."/>
            <person name="Post J.C."/>
            <person name="Ehrlich G.D."/>
        </authorList>
    </citation>
    <scope>NUCLEOTIDE SEQUENCE [LARGE SCALE GENOMIC DNA]</scope>
    <source>
        <strain>PittGG</strain>
    </source>
</reference>
<gene>
    <name type="ordered locus">CGSHiGG_08600</name>
</gene>
<protein>
    <recommendedName>
        <fullName evidence="1">Putative membrane protein insertion efficiency factor</fullName>
    </recommendedName>
</protein>
<evidence type="ECO:0000255" key="1">
    <source>
        <dbReference type="HAMAP-Rule" id="MF_00386"/>
    </source>
</evidence>
<name>YIDD_HAEIG</name>
<organism>
    <name type="scientific">Haemophilus influenzae (strain PittGG)</name>
    <dbReference type="NCBI Taxonomy" id="374931"/>
    <lineage>
        <taxon>Bacteria</taxon>
        <taxon>Pseudomonadati</taxon>
        <taxon>Pseudomonadota</taxon>
        <taxon>Gammaproteobacteria</taxon>
        <taxon>Pasteurellales</taxon>
        <taxon>Pasteurellaceae</taxon>
        <taxon>Haemophilus</taxon>
    </lineage>
</organism>
<dbReference type="EMBL" id="CP000672">
    <property type="protein sequence ID" value="ABR00540.1"/>
    <property type="molecule type" value="Genomic_DNA"/>
</dbReference>
<dbReference type="KEGG" id="hiq:CGSHiGG_08600"/>
<dbReference type="HOGENOM" id="CLU_144811_5_2_6"/>
<dbReference type="Proteomes" id="UP000001990">
    <property type="component" value="Chromosome"/>
</dbReference>
<dbReference type="GO" id="GO:0005886">
    <property type="term" value="C:plasma membrane"/>
    <property type="evidence" value="ECO:0007669"/>
    <property type="project" value="UniProtKB-SubCell"/>
</dbReference>
<dbReference type="HAMAP" id="MF_00386">
    <property type="entry name" value="UPF0161_YidD"/>
    <property type="match status" value="1"/>
</dbReference>
<dbReference type="InterPro" id="IPR002696">
    <property type="entry name" value="Membr_insert_effic_factor_YidD"/>
</dbReference>
<dbReference type="NCBIfam" id="TIGR00278">
    <property type="entry name" value="membrane protein insertion efficiency factor YidD"/>
    <property type="match status" value="1"/>
</dbReference>
<dbReference type="PANTHER" id="PTHR33383">
    <property type="entry name" value="MEMBRANE PROTEIN INSERTION EFFICIENCY FACTOR-RELATED"/>
    <property type="match status" value="1"/>
</dbReference>
<dbReference type="PANTHER" id="PTHR33383:SF1">
    <property type="entry name" value="MEMBRANE PROTEIN INSERTION EFFICIENCY FACTOR-RELATED"/>
    <property type="match status" value="1"/>
</dbReference>
<dbReference type="Pfam" id="PF01809">
    <property type="entry name" value="YidD"/>
    <property type="match status" value="1"/>
</dbReference>
<dbReference type="SMART" id="SM01234">
    <property type="entry name" value="Haemolytic"/>
    <property type="match status" value="1"/>
</dbReference>
<sequence length="86" mass="9564">MAETHSLGTKILIKIIRLYQIMISPFIGARCRFVPTCSCYGIEALKTHGLLKGGWLTLKRVLKCHPLNAGGFDPVPPKTNNNDEKK</sequence>
<accession>A5UID4</accession>
<proteinExistence type="inferred from homology"/>